<comment type="function">
    <text evidence="2">Plays an important role in the organization of the cytoskeleton. Binds to and sequesters actin monomers (G actin) and therefore inhibits actin polymerization.</text>
</comment>
<comment type="function">
    <molecule>Hemoregulatory peptide AcSDKP</molecule>
    <text evidence="1">Potent inhibitor of bone marrow derived stem cell differentiation (By similarity). Acts by inhibits the entry of hematopoietic pluripotent stem cells into the S-phase (By similarity).</text>
</comment>
<comment type="subunit">
    <text evidence="1 2">Identified in a complex composed of ACTA1, COBL, GSN AND TMSB4X (By similarity). Interacts with SERPINB1 (By similarity).</text>
</comment>
<comment type="subcellular location">
    <subcellularLocation>
        <location evidence="2">Cytoplasm</location>
        <location evidence="2">Cytoskeleton</location>
    </subcellularLocation>
</comment>
<comment type="PTM">
    <molecule>Hemoregulatory peptide AcSDKP</molecule>
    <text evidence="2">AcSDKP is inactivated by ACE, which removes the dipeptide Lys-Pro from its C-terminus.</text>
</comment>
<comment type="similarity">
    <text evidence="4">Belongs to the thymosin beta family.</text>
</comment>
<organism>
    <name type="scientific">Pongo abelii</name>
    <name type="common">Sumatran orangutan</name>
    <name type="synonym">Pongo pygmaeus abelii</name>
    <dbReference type="NCBI Taxonomy" id="9601"/>
    <lineage>
        <taxon>Eukaryota</taxon>
        <taxon>Metazoa</taxon>
        <taxon>Chordata</taxon>
        <taxon>Craniata</taxon>
        <taxon>Vertebrata</taxon>
        <taxon>Euteleostomi</taxon>
        <taxon>Mammalia</taxon>
        <taxon>Eutheria</taxon>
        <taxon>Euarchontoglires</taxon>
        <taxon>Primates</taxon>
        <taxon>Haplorrhini</taxon>
        <taxon>Catarrhini</taxon>
        <taxon>Hominidae</taxon>
        <taxon>Pongo</taxon>
    </lineage>
</organism>
<evidence type="ECO:0000250" key="1">
    <source>
        <dbReference type="UniProtKB" id="P62326"/>
    </source>
</evidence>
<evidence type="ECO:0000250" key="2">
    <source>
        <dbReference type="UniProtKB" id="P62328"/>
    </source>
</evidence>
<evidence type="ECO:0000256" key="3">
    <source>
        <dbReference type="SAM" id="MobiDB-lite"/>
    </source>
</evidence>
<evidence type="ECO:0000305" key="4"/>
<protein>
    <recommendedName>
        <fullName>Thymosin beta-4</fullName>
        <shortName>T beta-4</shortName>
    </recommendedName>
    <component>
        <recommendedName>
            <fullName evidence="4">Hemoregulatory peptide AcSDKP</fullName>
        </recommendedName>
        <alternativeName>
            <fullName>N-acetyl-SDKP</fullName>
            <shortName>AcSDKP</shortName>
        </alternativeName>
        <alternativeName>
            <fullName evidence="2">Seraspenide</fullName>
        </alternativeName>
    </component>
</protein>
<reference key="1">
    <citation type="submission" date="2004-11" db="EMBL/GenBank/DDBJ databases">
        <authorList>
            <consortium name="The German cDNA consortium"/>
        </authorList>
    </citation>
    <scope>NUCLEOTIDE SEQUENCE [LARGE SCALE MRNA]</scope>
    <source>
        <tissue>Brain cortex</tissue>
        <tissue>Kidney</tissue>
    </source>
</reference>
<name>TYB4_PONAB</name>
<accession>Q5R7H8</accession>
<accession>Q5R849</accession>
<keyword id="KW-0007">Acetylation</keyword>
<keyword id="KW-0009">Actin-binding</keyword>
<keyword id="KW-0963">Cytoplasm</keyword>
<keyword id="KW-0206">Cytoskeleton</keyword>
<keyword id="KW-1017">Isopeptide bond</keyword>
<keyword id="KW-0597">Phosphoprotein</keyword>
<keyword id="KW-1185">Reference proteome</keyword>
<keyword id="KW-0832">Ubl conjugation</keyword>
<feature type="initiator methionine" description="Removed" evidence="1">
    <location>
        <position position="1"/>
    </location>
</feature>
<feature type="chain" id="PRO_0000045925" description="Thymosin beta-4">
    <location>
        <begin position="2"/>
        <end position="44"/>
    </location>
</feature>
<feature type="peptide" id="PRO_0000034299" description="Hemoregulatory peptide AcSDKP" evidence="1">
    <location>
        <begin position="2"/>
        <end position="5"/>
    </location>
</feature>
<feature type="region of interest" description="Disordered" evidence="3">
    <location>
        <begin position="1"/>
        <end position="44"/>
    </location>
</feature>
<feature type="compositionally biased region" description="Basic and acidic residues" evidence="3">
    <location>
        <begin position="1"/>
        <end position="25"/>
    </location>
</feature>
<feature type="compositionally biased region" description="Basic and acidic residues" evidence="3">
    <location>
        <begin position="33"/>
        <end position="44"/>
    </location>
</feature>
<feature type="modified residue" description="N-acetylserine" evidence="1">
    <location>
        <position position="2"/>
    </location>
</feature>
<feature type="modified residue" description="Phosphoserine" evidence="2">
    <location>
        <position position="2"/>
    </location>
</feature>
<feature type="modified residue" description="N6-acetyllysine" evidence="2">
    <location>
        <position position="4"/>
    </location>
</feature>
<feature type="modified residue" description="N6-acetyllysine; alternate" evidence="2">
    <location>
        <position position="12"/>
    </location>
</feature>
<feature type="modified residue" description="Phosphothreonine" evidence="2">
    <location>
        <position position="23"/>
    </location>
</feature>
<feature type="modified residue" description="N6-acetyllysine" evidence="2">
    <location>
        <position position="26"/>
    </location>
</feature>
<feature type="modified residue" description="Phosphoserine" evidence="2">
    <location>
        <position position="31"/>
    </location>
</feature>
<feature type="modified residue" description="N6-acetyllysine" evidence="2">
    <location>
        <position position="32"/>
    </location>
</feature>
<feature type="modified residue" description="Phosphothreonine" evidence="2">
    <location>
        <position position="34"/>
    </location>
</feature>
<feature type="modified residue" description="N6-acetyllysine" evidence="2">
    <location>
        <position position="39"/>
    </location>
</feature>
<feature type="cross-link" description="Glycyl lysine isopeptide (Lys-Gly) (interchain with G-Cter in SUMO2); alternate" evidence="2">
    <location>
        <position position="12"/>
    </location>
</feature>
<feature type="sequence conflict" description="In Ref. 1; CAH92061." evidence="4" ref="1">
    <location>
        <position position="38"/>
    </location>
</feature>
<sequence>MSDKPDMAEIEKFDKSKLKKTETQEKNPLPSKETIEQEKQAGES</sequence>
<dbReference type="EMBL" id="CR859905">
    <property type="protein sequence ID" value="CAH92061.1"/>
    <property type="status" value="ALT_TERM"/>
    <property type="molecule type" value="mRNA"/>
</dbReference>
<dbReference type="EMBL" id="CR860138">
    <property type="protein sequence ID" value="CAH92282.1"/>
    <property type="molecule type" value="mRNA"/>
</dbReference>
<dbReference type="RefSeq" id="NP_001126333.1">
    <property type="nucleotide sequence ID" value="NM_001132861.1"/>
</dbReference>
<dbReference type="RefSeq" id="XP_009232863.1">
    <property type="nucleotide sequence ID" value="XM_009234588.4"/>
</dbReference>
<dbReference type="SMR" id="Q5R7H8"/>
<dbReference type="FunCoup" id="Q5R7H8">
    <property type="interactions" value="665"/>
</dbReference>
<dbReference type="STRING" id="9601.ENSPPYP00000022513"/>
<dbReference type="GeneID" id="100173314"/>
<dbReference type="KEGG" id="pon:100173314"/>
<dbReference type="CTD" id="7114"/>
<dbReference type="eggNOG" id="KOG4794">
    <property type="taxonomic scope" value="Eukaryota"/>
</dbReference>
<dbReference type="HOGENOM" id="CLU_208046_0_0_1"/>
<dbReference type="InParanoid" id="Q5R7H8"/>
<dbReference type="OrthoDB" id="9824403at2759"/>
<dbReference type="Proteomes" id="UP000001595">
    <property type="component" value="Chromosome X"/>
</dbReference>
<dbReference type="GO" id="GO:0005737">
    <property type="term" value="C:cytoplasm"/>
    <property type="evidence" value="ECO:0007669"/>
    <property type="project" value="UniProtKB-KW"/>
</dbReference>
<dbReference type="GO" id="GO:0005856">
    <property type="term" value="C:cytoskeleton"/>
    <property type="evidence" value="ECO:0007669"/>
    <property type="project" value="UniProtKB-SubCell"/>
</dbReference>
<dbReference type="GO" id="GO:0003785">
    <property type="term" value="F:actin monomer binding"/>
    <property type="evidence" value="ECO:0007669"/>
    <property type="project" value="InterPro"/>
</dbReference>
<dbReference type="GO" id="GO:0007015">
    <property type="term" value="P:actin filament organization"/>
    <property type="evidence" value="ECO:0007669"/>
    <property type="project" value="InterPro"/>
</dbReference>
<dbReference type="GO" id="GO:0030334">
    <property type="term" value="P:regulation of cell migration"/>
    <property type="evidence" value="ECO:0007669"/>
    <property type="project" value="TreeGrafter"/>
</dbReference>
<dbReference type="CDD" id="cd22059">
    <property type="entry name" value="WH2_BetaT"/>
    <property type="match status" value="1"/>
</dbReference>
<dbReference type="FunFam" id="1.20.5.520:FF:000001">
    <property type="entry name" value="Thymosin beta"/>
    <property type="match status" value="1"/>
</dbReference>
<dbReference type="Gene3D" id="1.20.5.520">
    <property type="entry name" value="Single helix bin"/>
    <property type="match status" value="1"/>
</dbReference>
<dbReference type="InterPro" id="IPR001152">
    <property type="entry name" value="Beta-thymosin"/>
</dbReference>
<dbReference type="InterPro" id="IPR038386">
    <property type="entry name" value="Beta-thymosin_sf"/>
</dbReference>
<dbReference type="PANTHER" id="PTHR12021">
    <property type="entry name" value="THYMOSIN BETA"/>
    <property type="match status" value="1"/>
</dbReference>
<dbReference type="PANTHER" id="PTHR12021:SF20">
    <property type="entry name" value="THYMOSIN BETA-4"/>
    <property type="match status" value="1"/>
</dbReference>
<dbReference type="Pfam" id="PF01290">
    <property type="entry name" value="Thymosin"/>
    <property type="match status" value="1"/>
</dbReference>
<dbReference type="PIRSF" id="PIRSF001828">
    <property type="entry name" value="Thymosin_beta"/>
    <property type="match status" value="1"/>
</dbReference>
<dbReference type="SMART" id="SM00152">
    <property type="entry name" value="THY"/>
    <property type="match status" value="1"/>
</dbReference>
<dbReference type="PROSITE" id="PS00500">
    <property type="entry name" value="THYMOSIN_B4"/>
    <property type="match status" value="1"/>
</dbReference>
<proteinExistence type="inferred from homology"/>
<gene>
    <name type="primary">TMSB4X</name>
</gene>